<gene>
    <name type="primary">ALDH3A1</name>
    <name type="synonym">ALDH3</name>
</gene>
<protein>
    <recommendedName>
        <fullName>Aldehyde dehydrogenase, dimeric NADP-preferring</fullName>
        <ecNumber evidence="2">1.2.1.5</ecNumber>
    </recommendedName>
    <alternativeName>
        <fullName>Aldehyde dehydrogenase 3</fullName>
    </alternativeName>
    <alternativeName>
        <fullName>Aldehyde dehydrogenase family 3 member A1</fullName>
    </alternativeName>
    <alternativeName>
        <fullName>Corneal 15.8 kDa protein</fullName>
    </alternativeName>
    <alternativeName>
        <fullName>Corneal protein 54</fullName>
        <shortName>bCP54</shortName>
    </alternativeName>
    <alternativeName>
        <fullName>Transparentin</fullName>
    </alternativeName>
</protein>
<sequence>NPHYVDKDRDLDIACRRIAWGKFMNSGQTCVAPDYILCDPSIQSQVVEKLKKSLKEFYGEDAKKSRDYGRIINSRHFQRVMGLLEGQKVAYGGTGDATTRYIAPTILTDVDPESPVMQEEVFGPVLPIMCVRSLEEAIQFITQREKPLALYVFSPNDKVIKKMIAETSSGGVTANDVVVHISVHSLPYGGVGDSGMGSYHGRKSFETFSHRRSCLVRPLLNEETLKARYPRARPICPDT</sequence>
<evidence type="ECO:0000250" key="1">
    <source>
        <dbReference type="UniProtKB" id="P30838"/>
    </source>
</evidence>
<evidence type="ECO:0000250" key="2">
    <source>
        <dbReference type="UniProtKB" id="P47739"/>
    </source>
</evidence>
<evidence type="ECO:0000255" key="3">
    <source>
        <dbReference type="PROSITE-ProRule" id="PRU10007"/>
    </source>
</evidence>
<evidence type="ECO:0000255" key="4">
    <source>
        <dbReference type="PROSITE-ProRule" id="PRU10008"/>
    </source>
</evidence>
<evidence type="ECO:0000305" key="5"/>
<feature type="chain" id="PRO_0000056469" description="Aldehyde dehydrogenase, dimeric NADP-preferring">
    <location>
        <begin position="1" status="less than"/>
        <end position="239" status="greater than"/>
    </location>
</feature>
<feature type="active site" evidence="3 4">
    <location>
        <position position="30"/>
    </location>
</feature>
<feature type="non-terminal residue">
    <location>
        <position position="1"/>
    </location>
</feature>
<feature type="non-terminal residue">
    <location>
        <position position="239"/>
    </location>
</feature>
<organism>
    <name type="scientific">Bos taurus</name>
    <name type="common">Bovine</name>
    <dbReference type="NCBI Taxonomy" id="9913"/>
    <lineage>
        <taxon>Eukaryota</taxon>
        <taxon>Metazoa</taxon>
        <taxon>Chordata</taxon>
        <taxon>Craniata</taxon>
        <taxon>Vertebrata</taxon>
        <taxon>Euteleostomi</taxon>
        <taxon>Mammalia</taxon>
        <taxon>Eutheria</taxon>
        <taxon>Laurasiatheria</taxon>
        <taxon>Artiodactyla</taxon>
        <taxon>Ruminantia</taxon>
        <taxon>Pecora</taxon>
        <taxon>Bovidae</taxon>
        <taxon>Bovinae</taxon>
        <taxon>Bos</taxon>
    </lineage>
</organism>
<comment type="function">
    <text evidence="1 2 5">ALDHs play a major role in the detoxification of alcohol-derived acetaldehyde (Probable). They are involved in the metabolism of corticosteroids, biogenic amines, neurotransmitters, and lipid peroxidation (Probable). Oxidizes medium and long chain aldehydes into non-toxic fatty acids (By similarity). Preferentially oxidizes aromatic aldehyde substrates (By similarity). Comprises about 50 percent of corneal epithelial soluble proteins (By similarity). May play a role in preventing corneal damage caused by ultraviolet light (By similarity).</text>
</comment>
<comment type="catalytic activity">
    <reaction evidence="2">
        <text>an aldehyde + NAD(+) + H2O = a carboxylate + NADH + 2 H(+)</text>
        <dbReference type="Rhea" id="RHEA:16185"/>
        <dbReference type="ChEBI" id="CHEBI:15377"/>
        <dbReference type="ChEBI" id="CHEBI:15378"/>
        <dbReference type="ChEBI" id="CHEBI:17478"/>
        <dbReference type="ChEBI" id="CHEBI:29067"/>
        <dbReference type="ChEBI" id="CHEBI:57540"/>
        <dbReference type="ChEBI" id="CHEBI:57945"/>
        <dbReference type="EC" id="1.2.1.5"/>
    </reaction>
</comment>
<comment type="catalytic activity">
    <reaction evidence="2">
        <text>octanal + NAD(+) + H2O = octanoate + NADH + 2 H(+)</text>
        <dbReference type="Rhea" id="RHEA:44100"/>
        <dbReference type="ChEBI" id="CHEBI:15377"/>
        <dbReference type="ChEBI" id="CHEBI:15378"/>
        <dbReference type="ChEBI" id="CHEBI:17935"/>
        <dbReference type="ChEBI" id="CHEBI:25646"/>
        <dbReference type="ChEBI" id="CHEBI:57540"/>
        <dbReference type="ChEBI" id="CHEBI:57945"/>
    </reaction>
</comment>
<comment type="subunit">
    <text evidence="1">Homodimer.</text>
</comment>
<comment type="subcellular location">
    <subcellularLocation>
        <location evidence="2">Cytoplasm</location>
    </subcellularLocation>
</comment>
<comment type="similarity">
    <text evidence="5">Belongs to the aldehyde dehydrogenase family.</text>
</comment>
<reference key="1">
    <citation type="journal article" date="1991" name="PCR Methods Appl.">
        <title>Degenerate oligonucleotide sequence-directed cross-species PCR cloning of the BCP 54/ALDH 3 cDNA: priming from inverted repeats and formation of tandem primer arrays.</title>
        <authorList>
            <person name="Cooper D.L."/>
            <person name="Baptist E.W."/>
        </authorList>
    </citation>
    <scope>NUCLEOTIDE SEQUENCE [MRNA]</scope>
    <source>
        <tissue>Cornea</tissue>
    </source>
</reference>
<reference key="2">
    <citation type="journal article" date="1991" name="Gene">
        <title>Bovine corneal protein 54K (BCP54) is a homologue of the tumor-associated (class 3) rat aldehyde dehydrogenase (RATALD).</title>
        <authorList>
            <person name="Cooper D.L."/>
            <person name="Baptist E.W."/>
            <person name="Enghild J.J."/>
            <person name="Isola N.R."/>
            <person name="Klintworth G.K."/>
        </authorList>
    </citation>
    <scope>NUCLEOTIDE SEQUENCE [MRNA] OF 1-140</scope>
    <source>
        <tissue>Cornea</tissue>
    </source>
</reference>
<reference key="3">
    <citation type="journal article" date="1990" name="Curr. Eye Res.">
        <title>Partial amino acid sequence determination of bovine corneal protein 54 K (BCP 54).</title>
        <authorList>
            <person name="Cooper D.L."/>
            <person name="Baptist E.W."/>
            <person name="Enghild J.J."/>
            <person name="Lee H."/>
            <person name="Isola N.R."/>
            <person name="Klintworth G.K."/>
        </authorList>
    </citation>
    <scope>PARTIAL PROTEIN SEQUENCE</scope>
</reference>
<keyword id="KW-0963">Cytoplasm</keyword>
<keyword id="KW-0903">Direct protein sequencing</keyword>
<keyword id="KW-0443">Lipid metabolism</keyword>
<keyword id="KW-0521">NADP</keyword>
<keyword id="KW-0560">Oxidoreductase</keyword>
<keyword id="KW-1185">Reference proteome</keyword>
<name>AL3A1_BOVIN</name>
<accession>P30907</accession>
<proteinExistence type="evidence at protein level"/>
<dbReference type="EC" id="1.2.1.5" evidence="2"/>
<dbReference type="EMBL" id="S51969">
    <property type="protein sequence ID" value="AAB24736.2"/>
    <property type="molecule type" value="mRNA"/>
</dbReference>
<dbReference type="EMBL" id="M37384">
    <property type="protein sequence ID" value="AAA30468.1"/>
    <property type="molecule type" value="mRNA"/>
</dbReference>
<dbReference type="PIR" id="PS0412">
    <property type="entry name" value="PS0412"/>
</dbReference>
<dbReference type="PIR" id="T01406">
    <property type="entry name" value="T01406"/>
</dbReference>
<dbReference type="SMR" id="P30907"/>
<dbReference type="FunCoup" id="P30907">
    <property type="interactions" value="102"/>
</dbReference>
<dbReference type="STRING" id="9913.ENSBTAP00000028125"/>
<dbReference type="PaxDb" id="9913-ENSBTAP00000028125"/>
<dbReference type="eggNOG" id="KOG2456">
    <property type="taxonomic scope" value="Eukaryota"/>
</dbReference>
<dbReference type="InParanoid" id="P30907"/>
<dbReference type="OrthoDB" id="440325at2759"/>
<dbReference type="Proteomes" id="UP000009136">
    <property type="component" value="Unplaced"/>
</dbReference>
<dbReference type="GO" id="GO:0005737">
    <property type="term" value="C:cytoplasm"/>
    <property type="evidence" value="ECO:0000318"/>
    <property type="project" value="GO_Central"/>
</dbReference>
<dbReference type="GO" id="GO:0004028">
    <property type="term" value="F:3-chloroallyl aldehyde dehydrogenase activity"/>
    <property type="evidence" value="ECO:0000318"/>
    <property type="project" value="GO_Central"/>
</dbReference>
<dbReference type="GO" id="GO:0004029">
    <property type="term" value="F:aldehyde dehydrogenase (NAD+) activity"/>
    <property type="evidence" value="ECO:0000318"/>
    <property type="project" value="GO_Central"/>
</dbReference>
<dbReference type="GO" id="GO:0006081">
    <property type="term" value="P:aldehyde metabolic process"/>
    <property type="evidence" value="ECO:0000318"/>
    <property type="project" value="GO_Central"/>
</dbReference>
<dbReference type="GO" id="GO:0006629">
    <property type="term" value="P:lipid metabolic process"/>
    <property type="evidence" value="ECO:0007669"/>
    <property type="project" value="UniProtKB-KW"/>
</dbReference>
<dbReference type="FunFam" id="3.40.309.10:FF:000003">
    <property type="entry name" value="Aldehyde dehydrogenase"/>
    <property type="match status" value="1"/>
</dbReference>
<dbReference type="FunFam" id="3.40.605.10:FF:000027">
    <property type="entry name" value="Aldehyde dehydrogenase, dimeric NADP-preferring"/>
    <property type="match status" value="1"/>
</dbReference>
<dbReference type="Gene3D" id="3.40.605.10">
    <property type="entry name" value="Aldehyde Dehydrogenase, Chain A, domain 1"/>
    <property type="match status" value="1"/>
</dbReference>
<dbReference type="Gene3D" id="3.40.309.10">
    <property type="entry name" value="Aldehyde Dehydrogenase, Chain A, domain 2"/>
    <property type="match status" value="1"/>
</dbReference>
<dbReference type="InterPro" id="IPR016161">
    <property type="entry name" value="Ald_DH/histidinol_DH"/>
</dbReference>
<dbReference type="InterPro" id="IPR016163">
    <property type="entry name" value="Ald_DH_C"/>
</dbReference>
<dbReference type="InterPro" id="IPR016160">
    <property type="entry name" value="Ald_DH_CS_CYS"/>
</dbReference>
<dbReference type="InterPro" id="IPR016162">
    <property type="entry name" value="Ald_DH_N"/>
</dbReference>
<dbReference type="InterPro" id="IPR015590">
    <property type="entry name" value="Aldehyde_DH_dom"/>
</dbReference>
<dbReference type="InterPro" id="IPR012394">
    <property type="entry name" value="Aldehyde_DH_NAD(P)"/>
</dbReference>
<dbReference type="PANTHER" id="PTHR43570">
    <property type="entry name" value="ALDEHYDE DEHYDROGENASE"/>
    <property type="match status" value="1"/>
</dbReference>
<dbReference type="PANTHER" id="PTHR43570:SF15">
    <property type="entry name" value="ALDEHYDE DEHYDROGENASE, DIMERIC NADP-PREFERRING"/>
    <property type="match status" value="1"/>
</dbReference>
<dbReference type="Pfam" id="PF00171">
    <property type="entry name" value="Aldedh"/>
    <property type="match status" value="1"/>
</dbReference>
<dbReference type="SUPFAM" id="SSF53720">
    <property type="entry name" value="ALDH-like"/>
    <property type="match status" value="1"/>
</dbReference>
<dbReference type="PROSITE" id="PS00070">
    <property type="entry name" value="ALDEHYDE_DEHYDR_CYS"/>
    <property type="match status" value="1"/>
</dbReference>